<proteinExistence type="evidence at protein level"/>
<name>BR1CA_RANDY</name>
<feature type="signal peptide" evidence="2 6">
    <location>
        <begin position="1"/>
        <end position="22"/>
    </location>
</feature>
<feature type="propeptide" id="PRO_0000391425" evidence="3">
    <location>
        <begin position="23"/>
        <end position="45"/>
    </location>
</feature>
<feature type="peptide" id="PRO_5000381475" description="Brevinin-1CDYa" evidence="3">
    <location>
        <begin position="48"/>
        <end position="67"/>
    </location>
</feature>
<feature type="disulfide bond" evidence="1">
    <location>
        <begin position="61"/>
        <end position="67"/>
    </location>
</feature>
<keyword id="KW-0878">Amphibian defense peptide</keyword>
<keyword id="KW-0044">Antibiotic</keyword>
<keyword id="KW-0929">Antimicrobial</keyword>
<keyword id="KW-0165">Cleavage on pair of basic residues</keyword>
<keyword id="KW-0204">Cytolysis</keyword>
<keyword id="KW-0903">Direct protein sequencing</keyword>
<keyword id="KW-1015">Disulfide bond</keyword>
<keyword id="KW-0354">Hemolysis</keyword>
<keyword id="KW-0964">Secreted</keyword>
<keyword id="KW-0732">Signal</keyword>
<dbReference type="EMBL" id="EU827800">
    <property type="protein sequence ID" value="ACF08000.1"/>
    <property type="molecule type" value="mRNA"/>
</dbReference>
<dbReference type="GO" id="GO:0005576">
    <property type="term" value="C:extracellular region"/>
    <property type="evidence" value="ECO:0000314"/>
    <property type="project" value="UniProtKB"/>
</dbReference>
<dbReference type="GO" id="GO:0050829">
    <property type="term" value="P:defense response to Gram-negative bacterium"/>
    <property type="evidence" value="ECO:0000314"/>
    <property type="project" value="UniProtKB"/>
</dbReference>
<dbReference type="GO" id="GO:0050830">
    <property type="term" value="P:defense response to Gram-positive bacterium"/>
    <property type="evidence" value="ECO:0000314"/>
    <property type="project" value="UniProtKB"/>
</dbReference>
<dbReference type="GO" id="GO:0044179">
    <property type="term" value="P:hemolysis in another organism"/>
    <property type="evidence" value="ECO:0000314"/>
    <property type="project" value="UniProtKB"/>
</dbReference>
<dbReference type="InterPro" id="IPR012520">
    <property type="entry name" value="Antimicrobial_frog_1"/>
</dbReference>
<dbReference type="InterPro" id="IPR004275">
    <property type="entry name" value="Frog_antimicrobial_propeptide"/>
</dbReference>
<dbReference type="Pfam" id="PF08018">
    <property type="entry name" value="Antimicrobial_1"/>
    <property type="match status" value="1"/>
</dbReference>
<dbReference type="Pfam" id="PF03032">
    <property type="entry name" value="FSAP_sig_propep"/>
    <property type="match status" value="1"/>
</dbReference>
<organism>
    <name type="scientific">Rana dybowskii</name>
    <name type="common">Dybovsky's frog</name>
    <name type="synonym">Korean brown frog</name>
    <dbReference type="NCBI Taxonomy" id="71582"/>
    <lineage>
        <taxon>Eukaryota</taxon>
        <taxon>Metazoa</taxon>
        <taxon>Chordata</taxon>
        <taxon>Craniata</taxon>
        <taxon>Vertebrata</taxon>
        <taxon>Euteleostomi</taxon>
        <taxon>Amphibia</taxon>
        <taxon>Batrachia</taxon>
        <taxon>Anura</taxon>
        <taxon>Neobatrachia</taxon>
        <taxon>Ranoidea</taxon>
        <taxon>Ranidae</taxon>
        <taxon>Rana</taxon>
        <taxon>Rana</taxon>
    </lineage>
</organism>
<accession>B3VZU0</accession>
<evidence type="ECO:0000250" key="1">
    <source>
        <dbReference type="UniProtKB" id="P32412"/>
    </source>
</evidence>
<evidence type="ECO:0000255" key="2"/>
<evidence type="ECO:0000269" key="3">
    <source>
    </source>
</evidence>
<evidence type="ECO:0000303" key="4">
    <source>
    </source>
</evidence>
<evidence type="ECO:0000305" key="5"/>
<evidence type="ECO:0000312" key="6">
    <source>
        <dbReference type="EMBL" id="ACF08000.1"/>
    </source>
</evidence>
<comment type="function">
    <text evidence="3">Antimicrobial peptide. Has low activity against the Gram-positive bacterium S.aureus (MIC=12.5 uM) and the Gram-negative bacterium E.coli (MIC=25 uM). Has weak hemolytic activity against human erythrocytes.</text>
</comment>
<comment type="subcellular location">
    <subcellularLocation>
        <location evidence="3">Secreted</location>
    </subcellularLocation>
</comment>
<comment type="tissue specificity">
    <text evidence="3">Expressed by the skin glands.</text>
</comment>
<comment type="similarity">
    <text evidence="2">Belongs to the frog skin active peptide (FSAP) family. Brevinin subfamily.</text>
</comment>
<reference evidence="5 6" key="1">
    <citation type="journal article" date="2009" name="Comp. Biochem. Physiol.">
        <title>Characterization of antimicrobial peptides isolated from the skin of the Chinese frog, Rana dybowskii.</title>
        <authorList>
            <person name="Jin L.-L."/>
            <person name="Li Q."/>
            <person name="Song S.-S."/>
            <person name="Feng K."/>
            <person name="Zhang D.-B."/>
            <person name="Wang Q.-Y."/>
            <person name="Chen Y.-H."/>
        </authorList>
    </citation>
    <scope>NUCLEOTIDE SEQUENCE [MRNA]</scope>
    <scope>PROTEIN SEQUENCE OF 48-67</scope>
    <scope>FUNCTION</scope>
    <scope>SUBCELLULAR LOCATION</scope>
    <scope>TISSUE SPECIFICITY</scope>
    <source>
        <tissue evidence="6">Skin</tissue>
        <tissue evidence="3">Skin secretion</tissue>
    </source>
</reference>
<sequence length="67" mass="7861">MFTLKKSLLLIFFLGTINLSLCEEERNADEEERRDDLEERDVEVEKRLLSLALAALPKLFCLIFKKC</sequence>
<protein>
    <recommendedName>
        <fullName evidence="4 6">Brevinin-1CDYa</fullName>
    </recommendedName>
</protein>